<dbReference type="GlyCosmos" id="Q07926">
    <property type="glycosylation" value="6 sites, No reported glycans"/>
</dbReference>
<dbReference type="GO" id="GO:0020002">
    <property type="term" value="C:host cell plasma membrane"/>
    <property type="evidence" value="ECO:0007669"/>
    <property type="project" value="UniProtKB-SubCell"/>
</dbReference>
<dbReference type="GO" id="GO:0016020">
    <property type="term" value="C:membrane"/>
    <property type="evidence" value="ECO:0007669"/>
    <property type="project" value="UniProtKB-KW"/>
</dbReference>
<dbReference type="GO" id="GO:0019031">
    <property type="term" value="C:viral envelope"/>
    <property type="evidence" value="ECO:0007669"/>
    <property type="project" value="UniProtKB-KW"/>
</dbReference>
<dbReference type="GO" id="GO:0055036">
    <property type="term" value="C:virion membrane"/>
    <property type="evidence" value="ECO:0007669"/>
    <property type="project" value="UniProtKB-SubCell"/>
</dbReference>
<dbReference type="GO" id="GO:0046789">
    <property type="term" value="F:host cell surface receptor binding"/>
    <property type="evidence" value="ECO:0007669"/>
    <property type="project" value="InterPro"/>
</dbReference>
<dbReference type="GO" id="GO:0039654">
    <property type="term" value="P:fusion of virus membrane with host endosome membrane"/>
    <property type="evidence" value="ECO:0007669"/>
    <property type="project" value="UniProtKB-KW"/>
</dbReference>
<dbReference type="GO" id="GO:0019064">
    <property type="term" value="P:fusion of virus membrane with host plasma membrane"/>
    <property type="evidence" value="ECO:0007669"/>
    <property type="project" value="InterPro"/>
</dbReference>
<dbReference type="GO" id="GO:0046718">
    <property type="term" value="P:symbiont entry into host cell"/>
    <property type="evidence" value="ECO:0007669"/>
    <property type="project" value="UniProtKB-KW"/>
</dbReference>
<dbReference type="GO" id="GO:0019062">
    <property type="term" value="P:virion attachment to host cell"/>
    <property type="evidence" value="ECO:0007669"/>
    <property type="project" value="UniProtKB-KW"/>
</dbReference>
<dbReference type="Gene3D" id="3.90.209.20">
    <property type="match status" value="1"/>
</dbReference>
<dbReference type="Gene3D" id="2.10.77.10">
    <property type="entry name" value="Hemagglutinin Chain A, Domain 2"/>
    <property type="match status" value="1"/>
</dbReference>
<dbReference type="InterPro" id="IPR008980">
    <property type="entry name" value="Capsid_hemagglutn"/>
</dbReference>
<dbReference type="InterPro" id="IPR013828">
    <property type="entry name" value="Hemagglutn_HA1_a/b_dom_sf"/>
</dbReference>
<dbReference type="InterPro" id="IPR001364">
    <property type="entry name" value="Hemagglutn_influenz_A/B"/>
</dbReference>
<dbReference type="Pfam" id="PF00509">
    <property type="entry name" value="Hemagglutinin"/>
    <property type="match status" value="1"/>
</dbReference>
<dbReference type="SUPFAM" id="SSF49818">
    <property type="entry name" value="Viral protein domain"/>
    <property type="match status" value="1"/>
</dbReference>
<reference key="1">
    <citation type="journal article" date="1992" name="J. Gen. Virol.">
        <title>Evolution of influenza B/Victoria/2/87-like viruses: occurrence of a genetically conserved virus under conditions of low epidemic activity.</title>
        <authorList>
            <person name="Kinnunen L."/>
            <person name="Ikonen N."/>
            <person name="Poeyry T."/>
            <person name="Pyhaelae R."/>
        </authorList>
    </citation>
    <scope>NUCLEOTIDE SEQUENCE [GENOMIC RNA]</scope>
</reference>
<gene>
    <name type="primary">HA</name>
</gene>
<organismHost>
    <name type="scientific">Homo sapiens</name>
    <name type="common">Human</name>
    <dbReference type="NCBI Taxonomy" id="9606"/>
</organismHost>
<proteinExistence type="inferred from homology"/>
<sequence>DRICTGITSSNSPHVVKTATQGEVNVTGVIPLTTTPTKSHFANLKGTKTRGKLCPKCLNCTDLDVALGRPKCMGTIPSAKASILYEVKPVTSGCFPIMHDRTKXRQLPNLLRGYENIRLSTHNVINAETAPGGPYKVGTSGSCPNVTNGNGFFATMAWAVPKNDNNKTATNPLTVEVPYICTEGEDQITVWGFHSDNETQMVKLYGDSKPQKFTSSANGVTTHYVSQIGGFPNQAEDGGLPQSGRIVVDYMVQKSGKTGTITYQRGILLPQKVWCASGRSKVIKGSLPLIGEADCLHEKYGGLNKSKPYYTGEHAKAIGNCPIWVKTPLKLANGTKYRPPAKLLKER</sequence>
<name>HEMA_INBF2</name>
<organism>
    <name type="scientific">Influenza B virus (strain B/Finland/56/1988)</name>
    <dbReference type="NCBI Taxonomy" id="38997"/>
    <lineage>
        <taxon>Viruses</taxon>
        <taxon>Riboviria</taxon>
        <taxon>Orthornavirae</taxon>
        <taxon>Negarnaviricota</taxon>
        <taxon>Polyploviricotina</taxon>
        <taxon>Insthoviricetes</taxon>
        <taxon>Articulavirales</taxon>
        <taxon>Orthomyxoviridae</taxon>
        <taxon>Betainfluenzavirus</taxon>
        <taxon>Betainfluenzavirus influenzae</taxon>
        <taxon>Influenza B virus</taxon>
    </lineage>
</organism>
<protein>
    <recommendedName>
        <fullName>Hemagglutinin</fullName>
    </recommendedName>
    <component>
        <recommendedName>
            <fullName>Hemagglutinin HA1 chain</fullName>
        </recommendedName>
    </component>
</protein>
<comment type="function">
    <text>Binds to sialic acid-containing receptors on the cell surface, bringing about the attachment of the virus particle to the cell. Plays a major role in the determination of host range restriction and virulence. Class I viral fusion protein. Responsible for penetration of the virus into the cell cytoplasm by mediating the fusion of the membrane of the endocytosed virus particle with the endosomal membrane. Low pH in endosomes induce an irreversible conformational change in HA2, releasing the fusion hydrophobic peptide. Several trimers are required to form a competent fusion pore.</text>
</comment>
<comment type="subunit">
    <text>Homotrimer of disulfide-linked HA1-HA2.</text>
</comment>
<comment type="subcellular location">
    <subcellularLocation>
        <location evidence="3">Virion membrane</location>
        <topology evidence="3">Single-pass type I membrane protein</topology>
    </subcellularLocation>
    <subcellularLocation>
        <location>Host apical cell membrane</location>
        <topology>Single-pass type I membrane protein</topology>
    </subcellularLocation>
    <text>Targeted to the apical plasma membrane in epithelial polarized cells through a signal present in the transmembrane domain. Associated with glycosphingolipid- and cholesterol-enriched detergent-resistant lipid rafts.</text>
</comment>
<comment type="PTM">
    <text evidence="1">In natural infection, inactive HA is matured into HA1 and HA2 outside the cell by one or more trypsin-like, arginine-specific endoprotease secreted by the bronchial epithelial cells. One identified protease that may be involved in this process is secreted in lungs by club cells (By similarity).</text>
</comment>
<comment type="PTM">
    <text evidence="1">Palmitoylated.</text>
</comment>
<comment type="miscellaneous">
    <text>Major glycoprotein, comprises over 80% of the envelope proteins present in virus particle.</text>
</comment>
<comment type="miscellaneous">
    <text>The extent of infection into host organism is determined by HA. Influenza viruses bud from the apical surface of polarized epithelial cells (e.g. bronchial epithelial cells) into lumen of lungs and are therefore usually pneumotropic. The reason is that HA is cleaved by tryptase clara which is restricted to lungs. However, HAs of H5 and H7 pantropic avian viruses subtypes can be cleaved by furin and subtilisin-type enzymes, allowing the virus to grow in other organs than lungs.</text>
</comment>
<comment type="miscellaneous">
    <text>The influenza B genome consist of 8 RNA segments. Genetic variation of hemagglutinin and/or neuraminidase genes results in the emergence of new influenza strains. The mechanism of variation can be the result of point mutations or the result of genetic reassortment between segments of two different strains.</text>
</comment>
<comment type="similarity">
    <text evidence="3">Belongs to the influenza viruses hemagglutinin family.</text>
</comment>
<feature type="chain" id="PRO_0000039094" description="Hemagglutinin HA1 chain">
    <location>
        <begin position="1"/>
        <end position="346"/>
    </location>
</feature>
<feature type="glycosylation site" description="N-linked (GlcNAc...) asparagine; by host" evidence="2">
    <location>
        <position position="25"/>
    </location>
</feature>
<feature type="glycosylation site" description="N-linked (GlcNAc...) asparagine; by host" evidence="2">
    <location>
        <position position="59"/>
    </location>
</feature>
<feature type="glycosylation site" description="N-linked (GlcNAc...) asparagine; by host" evidence="2">
    <location>
        <position position="145"/>
    </location>
</feature>
<feature type="glycosylation site" description="N-linked (GlcNAc...) asparagine; by host" evidence="2">
    <location>
        <position position="166"/>
    </location>
</feature>
<feature type="glycosylation site" description="N-linked (GlcNAc...) asparagine; by host" evidence="2">
    <location>
        <position position="304"/>
    </location>
</feature>
<feature type="glycosylation site" description="N-linked (GlcNAc...) asparagine; by host" evidence="2">
    <location>
        <position position="333"/>
    </location>
</feature>
<feature type="non-terminal residue">
    <location>
        <position position="1"/>
    </location>
</feature>
<feature type="non-terminal residue">
    <location>
        <position position="347"/>
    </location>
</feature>
<accession>Q07926</accession>
<keyword id="KW-1015">Disulfide bond</keyword>
<keyword id="KW-1170">Fusion of virus membrane with host endosomal membrane</keyword>
<keyword id="KW-1168">Fusion of virus membrane with host membrane</keyword>
<keyword id="KW-0325">Glycoprotein</keyword>
<keyword id="KW-0348">Hemagglutinin</keyword>
<keyword id="KW-1032">Host cell membrane</keyword>
<keyword id="KW-1043">Host membrane</keyword>
<keyword id="KW-0945">Host-virus interaction</keyword>
<keyword id="KW-0449">Lipoprotein</keyword>
<keyword id="KW-0472">Membrane</keyword>
<keyword id="KW-0564">Palmitate</keyword>
<keyword id="KW-0812">Transmembrane</keyword>
<keyword id="KW-1161">Viral attachment to host cell</keyword>
<keyword id="KW-0261">Viral envelope protein</keyword>
<keyword id="KW-1162">Viral penetration into host cytoplasm</keyword>
<keyword id="KW-0946">Virion</keyword>
<keyword id="KW-1160">Virus entry into host cell</keyword>
<evidence type="ECO:0000250" key="1"/>
<evidence type="ECO:0000255" key="2"/>
<evidence type="ECO:0000305" key="3"/>